<comment type="function">
    <text evidence="2 3 4 8 9">Catalyzes the oxidative decarboxylation of pyruvate to acetyl-CoA and carbon dioxide. The two electrons that are generated as a result of pyruvate decarboxylation are used in the reduction of low potential ferredoxins, which provide reducing equivalents for central metabolism. Also catalyzes the reverse reaction, i.e. the synthesis of pyruvate from acetyl-CoA and carbon dioxide. Appears to function physiologically in both directions (PubMed:10878009). The oxidation of pyruvate by PFOR is required to connect glycolysis and the Wood-Ljungdahl pathway of reductive acetogenesis. The conversion of acetyl-CoA to pyruvate links the Wood-Ljungdahl pathway of autotrophic CO2 fixation to the reductive tricarboxylic acid cycle (PubMed:10878009, PubMed:29581263). Can use methyl viologen as electron carrier in vitro (PubMed:29581263, PubMed:9214293).</text>
</comment>
<comment type="catalytic activity">
    <reaction evidence="2 10">
        <text>2 oxidized [2Fe-2S]-[ferredoxin] + pyruvate + CoA = 2 reduced [2Fe-2S]-[ferredoxin] + acetyl-CoA + CO2 + H(+)</text>
        <dbReference type="Rhea" id="RHEA:12765"/>
        <dbReference type="Rhea" id="RHEA-COMP:10000"/>
        <dbReference type="Rhea" id="RHEA-COMP:10001"/>
        <dbReference type="ChEBI" id="CHEBI:15361"/>
        <dbReference type="ChEBI" id="CHEBI:15378"/>
        <dbReference type="ChEBI" id="CHEBI:16526"/>
        <dbReference type="ChEBI" id="CHEBI:33737"/>
        <dbReference type="ChEBI" id="CHEBI:33738"/>
        <dbReference type="ChEBI" id="CHEBI:57287"/>
        <dbReference type="ChEBI" id="CHEBI:57288"/>
        <dbReference type="EC" id="1.2.7.1"/>
    </reaction>
    <physiologicalReaction direction="left-to-right" evidence="2">
        <dbReference type="Rhea" id="RHEA:12766"/>
    </physiologicalReaction>
    <physiologicalReaction direction="right-to-left" evidence="2">
        <dbReference type="Rhea" id="RHEA:12767"/>
    </physiologicalReaction>
</comment>
<comment type="cofactor">
    <cofactor evidence="3">
        <name>[4Fe-4S] cluster</name>
        <dbReference type="ChEBI" id="CHEBI:49883"/>
    </cofactor>
    <text evidence="3">Binds 3 [4Fe-4S] clusters per subunit.</text>
</comment>
<comment type="cofactor">
    <cofactor evidence="3">
        <name>thiamine diphosphate</name>
        <dbReference type="ChEBI" id="CHEBI:58937"/>
    </cofactor>
    <text evidence="3">Binds 1 thiamine pyrophosphate per subunit.</text>
</comment>
<comment type="cofactor">
    <cofactor evidence="3">
        <name>Mg(2+)</name>
        <dbReference type="ChEBI" id="CHEBI:18420"/>
    </cofactor>
    <text evidence="3">Binds 1 Mg(2+) ion per subunit.</text>
</comment>
<comment type="biophysicochemical properties">
    <kinetics>
        <KM evidence="2">9 uM for acetyl-CoA</KM>
        <KM evidence="2">2 mM for CO2</KM>
        <KM evidence="2">0.3 mM for pyruvate</KM>
        <KM evidence="2">0.32 uM for oxidized ferredoxin</KM>
        <KM evidence="2">0.27 uM for reduced ferredoxin</KM>
        <KM evidence="2">9.4 uM for oxidized rubredoxin</KM>
        <KM evidence="3">1.1 mM for methyl viologen (in the oxidative decarboxylation of pyruvate)</KM>
        <Vmax evidence="2">1.6 umol/min/mg enzyme for the synthesis of pyruvate from acetyl-CoA and CO2 with methyl viologen as electron donor</Vmax>
        <Vmax evidence="2">1.0 umol/min/mg enzyme for the synthesis of pyruvate with reduced ferredoxin as electron donor</Vmax>
        <Vmax evidence="2">14.2 umol/min/mg enzyme for the oxidative decarboxylation of pyruvate with methyl viologen as electron acceptor</Vmax>
        <Vmax evidence="2">14.8 umol/min/mg enzyme for the oxidative decarboxylation of pyruvate with oxidized ferredoxin as electron acceptor</Vmax>
        <Vmax evidence="2">9.9 umol/min/mg enzyme for the oxidative decarboxylation of pyruvate with oxidized rubredoxin as electron acceptor</Vmax>
        <text evidence="2 3">kcat is 3.2 sec(-1) for the synthesis of pyruvate from acetyl-CoA and CO2 with methyl viologen as electron donor (PubMed:10878009). kcat is 2.0 sec(-1) for the synthesis of pyruvate from acetyl-CoA and CO2 with reduced ferredoxin as electron donor (PubMed:10878009). kcat is 28 sec(-1) for the oxidative decarboxylation of pyruvate with methyl viologen as electron acceptor (PubMed:10878009). kcat is 33 sec(-1) for the oxidative decarboxylation of pyruvate with methyl viologen as electron acceptor (PubMed:29581263). kcat is 29.6 sec(-1) for the oxidative decarboxylation of pyruvate with oxidized ferredoxin as electron acceptor (PubMed:10878009). kcat is 19.8 sec(-1) for the oxidative decarboxylation of pyruvate with oxidized rubredoxin as electron acceptor (PubMed:10878009).</text>
    </kinetics>
</comment>
<comment type="subunit">
    <text evidence="3">Homodimer.</text>
</comment>
<comment type="similarity">
    <text evidence="7">Belongs to the pyruvate:ferredoxin/flavodoxin oxidoreductase family.</text>
</comment>
<reference key="1">
    <citation type="journal article" date="2008" name="Environ. Microbiol.">
        <title>The complete genome sequence of Moorella thermoacetica (f. Clostridium thermoaceticum).</title>
        <authorList>
            <person name="Pierce E."/>
            <person name="Xie G."/>
            <person name="Barabote R.D."/>
            <person name="Saunders E."/>
            <person name="Han C.S."/>
            <person name="Detter J.C."/>
            <person name="Richardson P."/>
            <person name="Brettin T.S."/>
            <person name="Das A."/>
            <person name="Ljungdahl L.G."/>
            <person name="Ragsdale S.W."/>
        </authorList>
    </citation>
    <scope>NUCLEOTIDE SEQUENCE [LARGE SCALE GENOMIC DNA]</scope>
    <source>
        <strain>ATCC 39073 / JCM 9320</strain>
    </source>
</reference>
<reference key="2">
    <citation type="journal article" date="1997" name="Biochemistry">
        <title>Mechanism of the Clostridium thermoaceticum pyruvate:ferredoxin oxidoreductase: evidence for the common catalytic intermediacy of the hydroxyethylthiamine pyropyrosphate radical.</title>
        <authorList>
            <person name="Menon S."/>
            <person name="Ragsdale S.W."/>
        </authorList>
    </citation>
    <scope>FUNCTION</scope>
    <scope>CATALYTIC ACTIVITY</scope>
    <scope>BIOPHYSICOCHEMICAL PROPERTIES</scope>
    <scope>REACTION MECHANISM</scope>
    <source>
        <strain>ATCC 39073 / JCM 9320</strain>
    </source>
</reference>
<reference key="3">
    <citation type="journal article" date="2000" name="J. Biol. Chem.">
        <title>The role of pyruvate ferredoxin oxidoreductase in pyruvate synthesis during autotrophic growth by the Wood-Ljungdahl pathway.</title>
        <authorList>
            <person name="Furdui C."/>
            <person name="Ragsdale S.W."/>
        </authorList>
    </citation>
    <scope>FUNCTION</scope>
    <scope>CATALYTIC ACTIVITY</scope>
    <scope>BIOPHYSICOCHEMICAL PROPERTIES</scope>
    <scope>IDENTIFICATION OF PHYSIOLOGICAL ELECTRON CARRIER FOR THE REACTIONS</scope>
</reference>
<reference evidence="15 16 17" key="4">
    <citation type="journal article" date="2018" name="Proc. Natl. Acad. Sci. U.S.A.">
        <title>Binding site for coenzyme A revealed in the structure of pyruvate:ferredoxin oxidoreductase from Moorella thermoacetica.</title>
        <authorList>
            <person name="Chen P.Y.-T."/>
            <person name="Aman H."/>
            <person name="Can M."/>
            <person name="Ragsdale S.W."/>
            <person name="Drennan C.L."/>
        </authorList>
    </citation>
    <scope>X-RAY CRYSTALLOGRAPHY (2.60 ANGSTROMS) IN COMPLEXES WITH [4FE-4S] CLUSTERS; THIAMINE PYROPHOSPHATE; LACTYL-TPP AND ACETYL-TPP INTERMEDIATES; MAGNESIUM AND COA</scope>
    <scope>FUNCTION</scope>
    <scope>COFACTOR</scope>
    <scope>SUBUNIT</scope>
    <scope>REACTION MECHANISM</scope>
</reference>
<dbReference type="EC" id="1.2.7.1" evidence="2 10"/>
<dbReference type="EMBL" id="CP000232">
    <property type="protein sequence ID" value="ABC18403.1"/>
    <property type="molecule type" value="Genomic_DNA"/>
</dbReference>
<dbReference type="RefSeq" id="YP_428946.1">
    <property type="nucleotide sequence ID" value="NC_007644.1"/>
</dbReference>
<dbReference type="PDB" id="6CIN">
    <property type="method" value="X-ray"/>
    <property type="resolution" value="2.60 A"/>
    <property type="chains" value="A/B/C/D/E/F=1-1171"/>
</dbReference>
<dbReference type="PDB" id="6CIO">
    <property type="method" value="X-ray"/>
    <property type="resolution" value="3.00 A"/>
    <property type="chains" value="A/B/C/D/E/F=1-1171"/>
</dbReference>
<dbReference type="PDB" id="6CIP">
    <property type="method" value="X-ray"/>
    <property type="resolution" value="3.19 A"/>
    <property type="chains" value="A/B/C/D/E/F=1-1171"/>
</dbReference>
<dbReference type="PDB" id="6CIQ">
    <property type="method" value="X-ray"/>
    <property type="resolution" value="3.30 A"/>
    <property type="chains" value="A/B/C=1-1171"/>
</dbReference>
<dbReference type="PDBsum" id="6CIN"/>
<dbReference type="PDBsum" id="6CIO"/>
<dbReference type="PDBsum" id="6CIP"/>
<dbReference type="PDBsum" id="6CIQ"/>
<dbReference type="SMR" id="Q2RMD6"/>
<dbReference type="STRING" id="264732.Moth_0064"/>
<dbReference type="EnsemblBacteria" id="ABC18403">
    <property type="protein sequence ID" value="ABC18403"/>
    <property type="gene ID" value="Moth_0064"/>
</dbReference>
<dbReference type="KEGG" id="mta:Moth_0064"/>
<dbReference type="PATRIC" id="fig|264732.11.peg.68"/>
<dbReference type="eggNOG" id="COG0674">
    <property type="taxonomic scope" value="Bacteria"/>
</dbReference>
<dbReference type="eggNOG" id="COG1013">
    <property type="taxonomic scope" value="Bacteria"/>
</dbReference>
<dbReference type="eggNOG" id="COG1014">
    <property type="taxonomic scope" value="Bacteria"/>
</dbReference>
<dbReference type="eggNOG" id="COG1145">
    <property type="taxonomic scope" value="Bacteria"/>
</dbReference>
<dbReference type="HOGENOM" id="CLU_002569_0_0_9"/>
<dbReference type="OrthoDB" id="9794954at2"/>
<dbReference type="GO" id="GO:0051539">
    <property type="term" value="F:4 iron, 4 sulfur cluster binding"/>
    <property type="evidence" value="ECO:0007669"/>
    <property type="project" value="UniProtKB-KW"/>
</dbReference>
<dbReference type="GO" id="GO:0005506">
    <property type="term" value="F:iron ion binding"/>
    <property type="evidence" value="ECO:0007669"/>
    <property type="project" value="InterPro"/>
</dbReference>
<dbReference type="GO" id="GO:0019164">
    <property type="term" value="F:pyruvate synthase activity"/>
    <property type="evidence" value="ECO:0007669"/>
    <property type="project" value="UniProtKB-EC"/>
</dbReference>
<dbReference type="GO" id="GO:0030976">
    <property type="term" value="F:thiamine pyrophosphate binding"/>
    <property type="evidence" value="ECO:0007669"/>
    <property type="project" value="InterPro"/>
</dbReference>
<dbReference type="GO" id="GO:0022900">
    <property type="term" value="P:electron transport chain"/>
    <property type="evidence" value="ECO:0007669"/>
    <property type="project" value="InterPro"/>
</dbReference>
<dbReference type="GO" id="GO:0006979">
    <property type="term" value="P:response to oxidative stress"/>
    <property type="evidence" value="ECO:0007669"/>
    <property type="project" value="TreeGrafter"/>
</dbReference>
<dbReference type="CDD" id="cd03377">
    <property type="entry name" value="TPP_PFOR_PNO"/>
    <property type="match status" value="1"/>
</dbReference>
<dbReference type="CDD" id="cd07034">
    <property type="entry name" value="TPP_PYR_PFOR_IOR-alpha_like"/>
    <property type="match status" value="1"/>
</dbReference>
<dbReference type="FunFam" id="3.30.70.20:FF:000022">
    <property type="entry name" value="Pyruvate:ferredoxin (Flavodoxin) oxidoreductase"/>
    <property type="match status" value="1"/>
</dbReference>
<dbReference type="FunFam" id="3.40.50.920:FF:000007">
    <property type="entry name" value="Pyruvate:ferredoxin (Flavodoxin) oxidoreductase"/>
    <property type="match status" value="1"/>
</dbReference>
<dbReference type="FunFam" id="3.40.50.970:FF:000012">
    <property type="entry name" value="Pyruvate:ferredoxin (Flavodoxin) oxidoreductase"/>
    <property type="match status" value="1"/>
</dbReference>
<dbReference type="FunFam" id="3.40.50.970:FF:000041">
    <property type="entry name" value="Pyruvate:ferredoxin (Flavodoxin) oxidoreductase"/>
    <property type="match status" value="1"/>
</dbReference>
<dbReference type="FunFam" id="3.40.920.10:FF:000001">
    <property type="entry name" value="Pyruvate:ferredoxin (Flavodoxin) oxidoreductase"/>
    <property type="match status" value="1"/>
</dbReference>
<dbReference type="Gene3D" id="3.30.70.20">
    <property type="match status" value="1"/>
</dbReference>
<dbReference type="Gene3D" id="3.40.50.920">
    <property type="match status" value="1"/>
</dbReference>
<dbReference type="Gene3D" id="3.40.50.970">
    <property type="match status" value="2"/>
</dbReference>
<dbReference type="Gene3D" id="3.40.920.10">
    <property type="entry name" value="Pyruvate-ferredoxin oxidoreductase, PFOR, domain III"/>
    <property type="match status" value="1"/>
</dbReference>
<dbReference type="Gene3D" id="4.10.780.10">
    <property type="entry name" value="Pyruvate-flavodoxin oxidoreductase, EKR domain"/>
    <property type="match status" value="1"/>
</dbReference>
<dbReference type="InterPro" id="IPR017896">
    <property type="entry name" value="4Fe4S_Fe-S-bd"/>
</dbReference>
<dbReference type="InterPro" id="IPR017900">
    <property type="entry name" value="4Fe4S_Fe_S_CS"/>
</dbReference>
<dbReference type="InterPro" id="IPR033412">
    <property type="entry name" value="PFOR_II"/>
</dbReference>
<dbReference type="InterPro" id="IPR050722">
    <property type="entry name" value="Pyruvate:ferred/Flavod_OxRd"/>
</dbReference>
<dbReference type="InterPro" id="IPR037112">
    <property type="entry name" value="Pyrv-flavodox_OxR_EKR_sf"/>
</dbReference>
<dbReference type="InterPro" id="IPR019456">
    <property type="entry name" value="Pyrv-flavodox_OxRtase_EKR"/>
</dbReference>
<dbReference type="InterPro" id="IPR019752">
    <property type="entry name" value="Pyrv/ketoisovalerate_OxRed_cat"/>
</dbReference>
<dbReference type="InterPro" id="IPR002880">
    <property type="entry name" value="Pyrv_Fd/Flavodoxin_OxRdtase_N"/>
</dbReference>
<dbReference type="InterPro" id="IPR011895">
    <property type="entry name" value="Pyrv_flavodox_OxRed"/>
</dbReference>
<dbReference type="InterPro" id="IPR002869">
    <property type="entry name" value="Pyrv_flavodox_OxRed_cen"/>
</dbReference>
<dbReference type="InterPro" id="IPR029061">
    <property type="entry name" value="THDP-binding"/>
</dbReference>
<dbReference type="InterPro" id="IPR011766">
    <property type="entry name" value="TPP_enzyme_TPP-bd"/>
</dbReference>
<dbReference type="InterPro" id="IPR009014">
    <property type="entry name" value="Transketo_C/PFOR_II"/>
</dbReference>
<dbReference type="NCBIfam" id="TIGR02176">
    <property type="entry name" value="pyruv_ox_red"/>
    <property type="match status" value="1"/>
</dbReference>
<dbReference type="PANTHER" id="PTHR32154">
    <property type="entry name" value="PYRUVATE-FLAVODOXIN OXIDOREDUCTASE-RELATED"/>
    <property type="match status" value="1"/>
</dbReference>
<dbReference type="PANTHER" id="PTHR32154:SF0">
    <property type="entry name" value="PYRUVATE-FLAVODOXIN OXIDOREDUCTASE-RELATED"/>
    <property type="match status" value="1"/>
</dbReference>
<dbReference type="Pfam" id="PF10371">
    <property type="entry name" value="EKR"/>
    <property type="match status" value="1"/>
</dbReference>
<dbReference type="Pfam" id="PF12838">
    <property type="entry name" value="Fer4_7"/>
    <property type="match status" value="1"/>
</dbReference>
<dbReference type="Pfam" id="PF17147">
    <property type="entry name" value="PFOR_II"/>
    <property type="match status" value="1"/>
</dbReference>
<dbReference type="Pfam" id="PF01558">
    <property type="entry name" value="POR"/>
    <property type="match status" value="1"/>
</dbReference>
<dbReference type="Pfam" id="PF01855">
    <property type="entry name" value="POR_N"/>
    <property type="match status" value="1"/>
</dbReference>
<dbReference type="Pfam" id="PF02775">
    <property type="entry name" value="TPP_enzyme_C"/>
    <property type="match status" value="1"/>
</dbReference>
<dbReference type="PIRSF" id="PIRSF000159">
    <property type="entry name" value="NifJ"/>
    <property type="match status" value="1"/>
</dbReference>
<dbReference type="SMART" id="SM00890">
    <property type="entry name" value="EKR"/>
    <property type="match status" value="1"/>
</dbReference>
<dbReference type="SUPFAM" id="SSF54862">
    <property type="entry name" value="4Fe-4S ferredoxins"/>
    <property type="match status" value="1"/>
</dbReference>
<dbReference type="SUPFAM" id="SSF53323">
    <property type="entry name" value="Pyruvate-ferredoxin oxidoreductase, PFOR, domain III"/>
    <property type="match status" value="1"/>
</dbReference>
<dbReference type="SUPFAM" id="SSF52518">
    <property type="entry name" value="Thiamin diphosphate-binding fold (THDP-binding)"/>
    <property type="match status" value="2"/>
</dbReference>
<dbReference type="SUPFAM" id="SSF52922">
    <property type="entry name" value="TK C-terminal domain-like"/>
    <property type="match status" value="1"/>
</dbReference>
<dbReference type="PROSITE" id="PS00198">
    <property type="entry name" value="4FE4S_FER_1"/>
    <property type="match status" value="2"/>
</dbReference>
<dbReference type="PROSITE" id="PS51379">
    <property type="entry name" value="4FE4S_FER_2"/>
    <property type="match status" value="2"/>
</dbReference>
<evidence type="ECO:0000255" key="1">
    <source>
        <dbReference type="PROSITE-ProRule" id="PRU00711"/>
    </source>
</evidence>
<evidence type="ECO:0000269" key="2">
    <source>
    </source>
</evidence>
<evidence type="ECO:0000269" key="3">
    <source>
    </source>
</evidence>
<evidence type="ECO:0000269" key="4">
    <source>
    </source>
</evidence>
<evidence type="ECO:0000303" key="5">
    <source>
    </source>
</evidence>
<evidence type="ECO:0000303" key="6">
    <source>
    </source>
</evidence>
<evidence type="ECO:0000305" key="7"/>
<evidence type="ECO:0000305" key="8">
    <source>
    </source>
</evidence>
<evidence type="ECO:0000305" key="9">
    <source>
    </source>
</evidence>
<evidence type="ECO:0000305" key="10">
    <source>
    </source>
</evidence>
<evidence type="ECO:0000312" key="11">
    <source>
        <dbReference type="EMBL" id="ABC18403.1"/>
    </source>
</evidence>
<evidence type="ECO:0000312" key="12">
    <source>
        <dbReference type="PDB" id="6CIN"/>
    </source>
</evidence>
<evidence type="ECO:0000312" key="13">
    <source>
        <dbReference type="PDB" id="6CIO"/>
    </source>
</evidence>
<evidence type="ECO:0000312" key="14">
    <source>
        <dbReference type="PDB" id="6CIQ"/>
    </source>
</evidence>
<evidence type="ECO:0007744" key="15">
    <source>
        <dbReference type="PDB" id="6CIN"/>
    </source>
</evidence>
<evidence type="ECO:0007744" key="16">
    <source>
        <dbReference type="PDB" id="6CIO"/>
    </source>
</evidence>
<evidence type="ECO:0007744" key="17">
    <source>
        <dbReference type="PDB" id="6CIP"/>
    </source>
</evidence>
<evidence type="ECO:0007829" key="18">
    <source>
        <dbReference type="PDB" id="6CIN"/>
    </source>
</evidence>
<evidence type="ECO:0007829" key="19">
    <source>
        <dbReference type="PDB" id="6CIO"/>
    </source>
</evidence>
<evidence type="ECO:0007829" key="20">
    <source>
        <dbReference type="PDB" id="6CIP"/>
    </source>
</evidence>
<protein>
    <recommendedName>
        <fullName evidence="6">Pyruvate:ferredoxin oxidoreductase</fullName>
        <shortName evidence="6">PFOR</shortName>
        <ecNumber evidence="2 10">1.2.7.1</ecNumber>
    </recommendedName>
    <alternativeName>
        <fullName evidence="5">Pyruvate synthase</fullName>
    </alternativeName>
</protein>
<gene>
    <name evidence="11" type="ordered locus">Moth_0064</name>
</gene>
<accession>Q2RMD6</accession>
<sequence>MPKQTLDGNTAAAHVAYAMSEVATIYPITPSSPMAEIADEWAAHGRKNIFGKTLQVAEMQSEAGAAGAVHGSLAAGALTTTFTASQGLLLMIPNMYKIAGELLPCVFHVAARALSTHALSIFGDHADVMAARQTGFAMLSSASVQEVMDLALVAHLATLKARVPFVHFFDGFRTSHEVQKIDVIEYEDMAKLVDWDAIRAFRQRALNPEHPHQRGTAQNPDIYFQSREAANPYYLATPGIVAQVMEQVAGLTGRHYHLFDYAGAPDAERVIVSMGSSCEVIEETVNYLVEKGEKVGLIKVRLFRPFSAEHFLKVLPASVKRIAVLDRTKEPGSLGEPLYEDVQTVLAEHGKNILVVGGRYGLGSKEFNPSMVKAVFDNLAATTPKNKFTVGITDDVTHTSLEIKEHIDTSPKGTFRCKFFGLGSDGTVGANKNSIKIIGDHTDMYAQGYFVYDSKKSGGVTISHLRFGKQPIQSAYLIDQADLIACHNPSYVGRYNLLEGIKPGGIFLLNSTWSAEEMDSRLPADMKRTIATKKLKFYNIDAVKIAQEIGLGSRINVIMQTAFFKIANVIPVDEAIKYIKDSIVKTYGKKGDKILNMNFAAVDRALEALEEIKYPASWADAVDEAAATVTEEPEFIQKVLRPINALKGDELPVSTFTPDGVFPVGTTKYEKRGIAVNIPQWQPENCIQCNQCSLVCPHAAIRPYLAKPADLAGAPETFVTKDAIGKEAAGLKFRIQVSPLDCTGCGNCADVCPAKVKALTMVPLEEVTAVEEANYNFAEQLPEVKVNFNPATVKGSQFRQPLLEFSGACAGCGETPYVKLVTQLFGDRMIIANATGCSSIWGGSAPACPYTVNRQGHGPAWASSLFEDNAEFGYGMALAVAKRQDELATAISKALEAPVSAAFKAACEGWLAGKDDADRSREYGDRIKALLPGEISQASGEVKDLLLDIDRQKDYLTKKSIWIIGGDGWAYDIGYGGLDHVLASGANVNVLVLDTEVYSNTGGQSSKATQTGAVARFAAGGKFTKKKDLGLMAMSYGYVYVASVAMGASHSQLMKALIEAEKYDGPSLIIAYAPCINHGINMTYSQREAKKAVEAGYWPLYRYNPQLAQEGKNPFILDYKTPTASFRDFLMGEIRYTSLKKQFPEKAEQLFAKAEADAKARLEQYKKLAEG</sequence>
<proteinExistence type="evidence at protein level"/>
<name>PFOR_MOOTA</name>
<keyword id="KW-0002">3D-structure</keyword>
<keyword id="KW-0004">4Fe-4S</keyword>
<keyword id="KW-0249">Electron transport</keyword>
<keyword id="KW-0408">Iron</keyword>
<keyword id="KW-0411">Iron-sulfur</keyword>
<keyword id="KW-0460">Magnesium</keyword>
<keyword id="KW-0479">Metal-binding</keyword>
<keyword id="KW-0560">Oxidoreductase</keyword>
<keyword id="KW-0670">Pyruvate</keyword>
<keyword id="KW-0813">Transport</keyword>
<feature type="chain" id="PRO_0000446263" description="Pyruvate:ferredoxin oxidoreductase">
    <location>
        <begin position="1"/>
        <end position="1171"/>
    </location>
</feature>
<feature type="domain" description="4Fe-4S ferredoxin-type 1" evidence="1">
    <location>
        <begin position="677"/>
        <end position="706"/>
    </location>
</feature>
<feature type="domain" description="4Fe-4S ferredoxin-type 2" evidence="1">
    <location>
        <begin position="733"/>
        <end position="764"/>
    </location>
</feature>
<feature type="binding site" evidence="9 13">
    <location>
        <position position="29"/>
    </location>
    <ligand>
        <name>pyruvate</name>
        <dbReference type="ChEBI" id="CHEBI:15361"/>
    </ligand>
</feature>
<feature type="binding site" evidence="9 13">
    <location>
        <position position="112"/>
    </location>
    <ligand>
        <name>pyruvate</name>
        <dbReference type="ChEBI" id="CHEBI:15361"/>
    </ligand>
</feature>
<feature type="binding site" evidence="3 14">
    <location>
        <begin position="424"/>
        <end position="428"/>
    </location>
    <ligand>
        <name>CoA</name>
        <dbReference type="ChEBI" id="CHEBI:57287"/>
    </ligand>
</feature>
<feature type="binding site" evidence="3 14">
    <location>
        <position position="456"/>
    </location>
    <ligand>
        <name>CoA</name>
        <dbReference type="ChEBI" id="CHEBI:57287"/>
    </ligand>
</feature>
<feature type="binding site" evidence="3 14">
    <location>
        <position position="556"/>
    </location>
    <ligand>
        <name>CoA</name>
        <dbReference type="ChEBI" id="CHEBI:57287"/>
    </ligand>
</feature>
<feature type="binding site" evidence="3 14">
    <location>
        <position position="598"/>
    </location>
    <ligand>
        <name>CoA</name>
        <dbReference type="ChEBI" id="CHEBI:57287"/>
    </ligand>
</feature>
<feature type="binding site" evidence="3 12">
    <location>
        <position position="686"/>
    </location>
    <ligand>
        <name>[4Fe-4S] cluster</name>
        <dbReference type="ChEBI" id="CHEBI:49883"/>
        <label>1</label>
    </ligand>
</feature>
<feature type="binding site" evidence="3 12">
    <location>
        <position position="689"/>
    </location>
    <ligand>
        <name>[4Fe-4S] cluster</name>
        <dbReference type="ChEBI" id="CHEBI:49883"/>
        <label>1</label>
    </ligand>
</feature>
<feature type="binding site" evidence="3 12">
    <location>
        <position position="692"/>
    </location>
    <ligand>
        <name>[4Fe-4S] cluster</name>
        <dbReference type="ChEBI" id="CHEBI:49883"/>
        <label>1</label>
    </ligand>
</feature>
<feature type="binding site" evidence="3 12">
    <location>
        <position position="696"/>
    </location>
    <ligand>
        <name>[4Fe-4S] cluster</name>
        <dbReference type="ChEBI" id="CHEBI:49883"/>
        <label>2</label>
    </ligand>
</feature>
<feature type="binding site" evidence="3 12">
    <location>
        <position position="742"/>
    </location>
    <ligand>
        <name>[4Fe-4S] cluster</name>
        <dbReference type="ChEBI" id="CHEBI:49883"/>
        <label>2</label>
    </ligand>
</feature>
<feature type="binding site" evidence="3 12">
    <location>
        <position position="745"/>
    </location>
    <ligand>
        <name>[4Fe-4S] cluster</name>
        <dbReference type="ChEBI" id="CHEBI:49883"/>
        <label>2</label>
    </ligand>
</feature>
<feature type="binding site" evidence="3 12">
    <location>
        <position position="748"/>
    </location>
    <ligand>
        <name>[4Fe-4S] cluster</name>
        <dbReference type="ChEBI" id="CHEBI:49883"/>
        <label>2</label>
    </ligand>
</feature>
<feature type="binding site" evidence="3 12">
    <location>
        <position position="752"/>
    </location>
    <ligand>
        <name>[4Fe-4S] cluster</name>
        <dbReference type="ChEBI" id="CHEBI:49883"/>
        <label>1</label>
    </ligand>
</feature>
<feature type="binding site" evidence="3 12">
    <location>
        <position position="809"/>
    </location>
    <ligand>
        <name>[4Fe-4S] cluster</name>
        <dbReference type="ChEBI" id="CHEBI:49883"/>
        <label>3</label>
    </ligand>
</feature>
<feature type="binding site" evidence="3 12">
    <location>
        <position position="812"/>
    </location>
    <ligand>
        <name>[4Fe-4S] cluster</name>
        <dbReference type="ChEBI" id="CHEBI:49883"/>
        <label>3</label>
    </ligand>
</feature>
<feature type="binding site" evidence="3 13">
    <location>
        <position position="814"/>
    </location>
    <ligand>
        <name>thiamine diphosphate</name>
        <dbReference type="ChEBI" id="CHEBI:58937"/>
    </ligand>
</feature>
<feature type="binding site" evidence="3 12">
    <location>
        <position position="837"/>
    </location>
    <ligand>
        <name>[4Fe-4S] cluster</name>
        <dbReference type="ChEBI" id="CHEBI:49883"/>
        <label>3</label>
    </ligand>
</feature>
<feature type="binding site" evidence="3 12">
    <location>
        <position position="837"/>
    </location>
    <ligand>
        <name>thiamine diphosphate</name>
        <dbReference type="ChEBI" id="CHEBI:58937"/>
    </ligand>
</feature>
<feature type="binding site" evidence="3 12">
    <location>
        <begin position="967"/>
        <end position="969"/>
    </location>
    <ligand>
        <name>thiamine diphosphate</name>
        <dbReference type="ChEBI" id="CHEBI:58937"/>
    </ligand>
</feature>
<feature type="binding site" evidence="3 12">
    <location>
        <position position="967"/>
    </location>
    <ligand>
        <name>Mg(2+)</name>
        <dbReference type="ChEBI" id="CHEBI:18420"/>
    </ligand>
</feature>
<feature type="binding site" evidence="3 12">
    <location>
        <begin position="995"/>
        <end position="1000"/>
    </location>
    <ligand>
        <name>thiamine diphosphate</name>
        <dbReference type="ChEBI" id="CHEBI:58937"/>
    </ligand>
</feature>
<feature type="binding site" evidence="3 12">
    <location>
        <position position="995"/>
    </location>
    <ligand>
        <name>Mg(2+)</name>
        <dbReference type="ChEBI" id="CHEBI:18420"/>
    </ligand>
</feature>
<feature type="binding site" evidence="3 12">
    <location>
        <position position="997"/>
    </location>
    <ligand>
        <name>Mg(2+)</name>
        <dbReference type="ChEBI" id="CHEBI:18420"/>
    </ligand>
</feature>
<feature type="binding site" evidence="9 13">
    <location>
        <position position="1000"/>
    </location>
    <ligand>
        <name>pyruvate</name>
        <dbReference type="ChEBI" id="CHEBI:15361"/>
    </ligand>
</feature>
<feature type="binding site" evidence="3 12">
    <location>
        <position position="1075"/>
    </location>
    <ligand>
        <name>[4Fe-4S] cluster</name>
        <dbReference type="ChEBI" id="CHEBI:49883"/>
        <label>3</label>
    </ligand>
</feature>
<feature type="strand" evidence="18">
    <location>
        <begin position="3"/>
        <end position="7"/>
    </location>
</feature>
<feature type="helix" evidence="18">
    <location>
        <begin position="8"/>
        <end position="19"/>
    </location>
</feature>
<feature type="strand" evidence="18">
    <location>
        <begin position="21"/>
        <end position="25"/>
    </location>
</feature>
<feature type="turn" evidence="18">
    <location>
        <begin position="29"/>
        <end position="31"/>
    </location>
</feature>
<feature type="helix" evidence="18">
    <location>
        <begin position="32"/>
        <end position="43"/>
    </location>
</feature>
<feature type="strand" evidence="19">
    <location>
        <begin position="51"/>
        <end position="53"/>
    </location>
</feature>
<feature type="strand" evidence="18">
    <location>
        <begin position="55"/>
        <end position="58"/>
    </location>
</feature>
<feature type="helix" evidence="18">
    <location>
        <begin position="62"/>
        <end position="74"/>
    </location>
</feature>
<feature type="strand" evidence="18">
    <location>
        <begin position="79"/>
        <end position="83"/>
    </location>
</feature>
<feature type="helix" evidence="18">
    <location>
        <begin position="85"/>
        <end position="100"/>
    </location>
</feature>
<feature type="strand" evidence="18">
    <location>
        <begin position="106"/>
        <end position="111"/>
    </location>
</feature>
<feature type="strand" evidence="18">
    <location>
        <begin position="116"/>
        <end position="119"/>
    </location>
</feature>
<feature type="helix" evidence="18">
    <location>
        <begin position="126"/>
        <end position="129"/>
    </location>
</feature>
<feature type="turn" evidence="18">
    <location>
        <begin position="130"/>
        <end position="133"/>
    </location>
</feature>
<feature type="strand" evidence="18">
    <location>
        <begin position="137"/>
        <end position="141"/>
    </location>
</feature>
<feature type="helix" evidence="18">
    <location>
        <begin position="144"/>
        <end position="161"/>
    </location>
</feature>
<feature type="strand" evidence="18">
    <location>
        <begin position="165"/>
        <end position="170"/>
    </location>
</feature>
<feature type="turn" evidence="18">
    <location>
        <begin position="171"/>
        <end position="175"/>
    </location>
</feature>
<feature type="strand" evidence="18">
    <location>
        <begin position="178"/>
        <end position="182"/>
    </location>
</feature>
<feature type="helix" evidence="18">
    <location>
        <begin position="186"/>
        <end position="190"/>
    </location>
</feature>
<feature type="helix" evidence="18">
    <location>
        <begin position="195"/>
        <end position="203"/>
    </location>
</feature>
<feature type="strand" evidence="18">
    <location>
        <begin position="213"/>
        <end position="215"/>
    </location>
</feature>
<feature type="turn" evidence="18">
    <location>
        <begin position="220"/>
        <end position="222"/>
    </location>
</feature>
<feature type="helix" evidence="18">
    <location>
        <begin position="223"/>
        <end position="228"/>
    </location>
</feature>
<feature type="helix" evidence="18">
    <location>
        <begin position="231"/>
        <end position="252"/>
    </location>
</feature>
<feature type="strand" evidence="18">
    <location>
        <begin position="258"/>
        <end position="263"/>
    </location>
</feature>
<feature type="strand" evidence="18">
    <location>
        <begin position="268"/>
        <end position="274"/>
    </location>
</feature>
<feature type="helix" evidence="18">
    <location>
        <begin position="277"/>
        <end position="290"/>
    </location>
</feature>
<feature type="strand" evidence="18">
    <location>
        <begin position="295"/>
        <end position="305"/>
    </location>
</feature>
<feature type="helix" evidence="18">
    <location>
        <begin position="308"/>
        <end position="313"/>
    </location>
</feature>
<feature type="strand" evidence="18">
    <location>
        <begin position="321"/>
        <end position="327"/>
    </location>
</feature>
<feature type="strand" evidence="19">
    <location>
        <begin position="333"/>
        <end position="335"/>
    </location>
</feature>
<feature type="helix" evidence="18">
    <location>
        <begin position="337"/>
        <end position="348"/>
    </location>
</feature>
<feature type="strand" evidence="18">
    <location>
        <begin position="354"/>
        <end position="360"/>
    </location>
</feature>
<feature type="helix" evidence="18">
    <location>
        <begin position="362"/>
        <end position="364"/>
    </location>
</feature>
<feature type="helix" evidence="18">
    <location>
        <begin position="369"/>
        <end position="380"/>
    </location>
</feature>
<feature type="strand" evidence="18">
    <location>
        <begin position="381"/>
        <end position="383"/>
    </location>
</feature>
<feature type="strand" evidence="18">
    <location>
        <begin position="386"/>
        <end position="392"/>
    </location>
</feature>
<feature type="turn" evidence="18">
    <location>
        <begin position="395"/>
        <end position="397"/>
    </location>
</feature>
<feature type="strand" evidence="18">
    <location>
        <begin position="415"/>
        <end position="422"/>
    </location>
</feature>
<feature type="helix" evidence="18">
    <location>
        <begin position="427"/>
        <end position="441"/>
    </location>
</feature>
<feature type="strand" evidence="18">
    <location>
        <begin position="445"/>
        <end position="451"/>
    </location>
</feature>
<feature type="strand" evidence="18">
    <location>
        <begin position="454"/>
        <end position="458"/>
    </location>
</feature>
<feature type="strand" evidence="18">
    <location>
        <begin position="460"/>
        <end position="470"/>
    </location>
</feature>
<feature type="strand" evidence="18">
    <location>
        <begin position="482"/>
        <end position="487"/>
    </location>
</feature>
<feature type="helix" evidence="18">
    <location>
        <begin position="489"/>
        <end position="491"/>
    </location>
</feature>
<feature type="turn" evidence="18">
    <location>
        <begin position="492"/>
        <end position="494"/>
    </location>
</feature>
<feature type="turn" evidence="18">
    <location>
        <begin position="497"/>
        <end position="500"/>
    </location>
</feature>
<feature type="strand" evidence="18">
    <location>
        <begin position="506"/>
        <end position="510"/>
    </location>
</feature>
<feature type="turn" evidence="18">
    <location>
        <begin position="515"/>
        <end position="517"/>
    </location>
</feature>
<feature type="helix" evidence="18">
    <location>
        <begin position="518"/>
        <end position="521"/>
    </location>
</feature>
<feature type="helix" evidence="18">
    <location>
        <begin position="524"/>
        <end position="532"/>
    </location>
</feature>
<feature type="strand" evidence="18">
    <location>
        <begin position="536"/>
        <end position="540"/>
    </location>
</feature>
<feature type="helix" evidence="18">
    <location>
        <begin position="542"/>
        <end position="549"/>
    </location>
</feature>
<feature type="helix" evidence="18">
    <location>
        <begin position="556"/>
        <end position="567"/>
    </location>
</feature>
<feature type="helix" evidence="18">
    <location>
        <begin position="572"/>
        <end position="587"/>
    </location>
</feature>
<feature type="turn" evidence="18">
    <location>
        <begin position="588"/>
        <end position="590"/>
    </location>
</feature>
<feature type="helix" evidence="18">
    <location>
        <begin position="592"/>
        <end position="608"/>
    </location>
</feature>
<feature type="strand" evidence="20">
    <location>
        <begin position="610"/>
        <end position="612"/>
    </location>
</feature>
<feature type="helix" evidence="18">
    <location>
        <begin position="616"/>
        <end position="620"/>
    </location>
</feature>
<feature type="helix" evidence="18">
    <location>
        <begin position="634"/>
        <end position="638"/>
    </location>
</feature>
<feature type="helix" evidence="18">
    <location>
        <begin position="640"/>
        <end position="644"/>
    </location>
</feature>
<feature type="helix" evidence="18">
    <location>
        <begin position="648"/>
        <end position="650"/>
    </location>
</feature>
<feature type="helix" evidence="18">
    <location>
        <begin position="653"/>
        <end position="655"/>
    </location>
</feature>
<feature type="helix" evidence="18">
    <location>
        <begin position="667"/>
        <end position="669"/>
    </location>
</feature>
<feature type="strand" evidence="18">
    <location>
        <begin position="676"/>
        <end position="681"/>
    </location>
</feature>
<feature type="turn" evidence="18">
    <location>
        <begin position="683"/>
        <end position="685"/>
    </location>
</feature>
<feature type="helix" evidence="18">
    <location>
        <begin position="691"/>
        <end position="695"/>
    </location>
</feature>
<feature type="strand" evidence="18">
    <location>
        <begin position="701"/>
        <end position="706"/>
    </location>
</feature>
<feature type="helix" evidence="18">
    <location>
        <begin position="708"/>
        <end position="711"/>
    </location>
</feature>
<feature type="turn" evidence="18">
    <location>
        <begin position="727"/>
        <end position="730"/>
    </location>
</feature>
<feature type="strand" evidence="18">
    <location>
        <begin position="732"/>
        <end position="737"/>
    </location>
</feature>
<feature type="turn" evidence="18">
    <location>
        <begin position="739"/>
        <end position="741"/>
    </location>
</feature>
<feature type="helix" evidence="18">
    <location>
        <begin position="747"/>
        <end position="751"/>
    </location>
</feature>
<feature type="strand" evidence="18">
    <location>
        <begin position="754"/>
        <end position="756"/>
    </location>
</feature>
<feature type="strand" evidence="18">
    <location>
        <begin position="758"/>
        <end position="763"/>
    </location>
</feature>
<feature type="helix" evidence="18">
    <location>
        <begin position="764"/>
        <end position="779"/>
    </location>
</feature>
<feature type="helix" evidence="18">
    <location>
        <begin position="793"/>
        <end position="797"/>
    </location>
</feature>
<feature type="helix" evidence="18">
    <location>
        <begin position="815"/>
        <end position="825"/>
    </location>
</feature>
<feature type="helix" evidence="18">
    <location>
        <begin position="826"/>
        <end position="828"/>
    </location>
</feature>
<feature type="strand" evidence="18">
    <location>
        <begin position="829"/>
        <end position="833"/>
    </location>
</feature>
<feature type="helix" evidence="18">
    <location>
        <begin position="837"/>
        <end position="842"/>
    </location>
</feature>
<feature type="strand" evidence="18">
    <location>
        <begin position="860"/>
        <end position="862"/>
    </location>
</feature>
<feature type="helix" evidence="18">
    <location>
        <begin position="869"/>
        <end position="895"/>
    </location>
</feature>
<feature type="helix" evidence="18">
    <location>
        <begin position="901"/>
        <end position="913"/>
    </location>
</feature>
<feature type="helix" evidence="18">
    <location>
        <begin position="917"/>
        <end position="936"/>
    </location>
</feature>
<feature type="helix" evidence="18">
    <location>
        <begin position="940"/>
        <end position="951"/>
    </location>
</feature>
<feature type="helix" evidence="18">
    <location>
        <begin position="952"/>
        <end position="955"/>
    </location>
</feature>
<feature type="strand" evidence="18">
    <location>
        <begin position="960"/>
        <end position="966"/>
    </location>
</feature>
<feature type="helix" evidence="18">
    <location>
        <begin position="967"/>
        <end position="971"/>
    </location>
</feature>
<feature type="turn" evidence="18">
    <location>
        <begin position="972"/>
        <end position="974"/>
    </location>
</feature>
<feature type="helix" evidence="18">
    <location>
        <begin position="975"/>
        <end position="984"/>
    </location>
</feature>
<feature type="strand" evidence="18">
    <location>
        <begin position="989"/>
        <end position="994"/>
    </location>
</feature>
<feature type="strand" evidence="18">
    <location>
        <begin position="996"/>
        <end position="998"/>
    </location>
</feature>
<feature type="turn" evidence="18">
    <location>
        <begin position="999"/>
        <end position="1002"/>
    </location>
</feature>
<feature type="helix" evidence="18">
    <location>
        <begin position="1029"/>
        <end position="1034"/>
    </location>
</feature>
<feature type="strand" evidence="18">
    <location>
        <begin position="1037"/>
        <end position="1044"/>
    </location>
</feature>
<feature type="turn" evidence="18">
    <location>
        <begin position="1046"/>
        <end position="1048"/>
    </location>
</feature>
<feature type="helix" evidence="18">
    <location>
        <begin position="1050"/>
        <end position="1062"/>
    </location>
</feature>
<feature type="strand" evidence="18">
    <location>
        <begin position="1063"/>
        <end position="1065"/>
    </location>
</feature>
<feature type="strand" evidence="18">
    <location>
        <begin position="1067"/>
        <end position="1072"/>
    </location>
</feature>
<feature type="helix" evidence="18">
    <location>
        <begin position="1076"/>
        <end position="1078"/>
    </location>
</feature>
<feature type="helix" evidence="18">
    <location>
        <begin position="1082"/>
        <end position="1084"/>
    </location>
</feature>
<feature type="helix" evidence="18">
    <location>
        <begin position="1085"/>
        <end position="1094"/>
    </location>
</feature>
<feature type="strand" evidence="18">
    <location>
        <begin position="1101"/>
        <end position="1103"/>
    </location>
</feature>
<feature type="helix" evidence="18">
    <location>
        <begin position="1105"/>
        <end position="1109"/>
    </location>
</feature>
<feature type="strand" evidence="18">
    <location>
        <begin position="1114"/>
        <end position="1118"/>
    </location>
</feature>
<feature type="helix" evidence="18">
    <location>
        <begin position="1126"/>
        <end position="1130"/>
    </location>
</feature>
<feature type="helix" evidence="18">
    <location>
        <begin position="1134"/>
        <end position="1137"/>
    </location>
</feature>
<feature type="helix" evidence="18">
    <location>
        <begin position="1148"/>
        <end position="1169"/>
    </location>
</feature>
<organism>
    <name type="scientific">Moorella thermoacetica (strain ATCC 39073 / JCM 9320)</name>
    <dbReference type="NCBI Taxonomy" id="264732"/>
    <lineage>
        <taxon>Bacteria</taxon>
        <taxon>Bacillati</taxon>
        <taxon>Bacillota</taxon>
        <taxon>Clostridia</taxon>
        <taxon>Moorellales</taxon>
        <taxon>Moorellaceae</taxon>
        <taxon>Moorella</taxon>
    </lineage>
</organism>